<keyword id="KW-0066">ATP synthesis</keyword>
<keyword id="KW-0997">Cell inner membrane</keyword>
<keyword id="KW-1003">Cell membrane</keyword>
<keyword id="KW-0139">CF(1)</keyword>
<keyword id="KW-0375">Hydrogen ion transport</keyword>
<keyword id="KW-0406">Ion transport</keyword>
<keyword id="KW-0472">Membrane</keyword>
<keyword id="KW-1185">Reference proteome</keyword>
<keyword id="KW-0813">Transport</keyword>
<proteinExistence type="inferred from homology"/>
<comment type="function">
    <text evidence="1">Produces ATP from ADP in the presence of a proton gradient across the membrane. The gamma chain is believed to be important in regulating ATPase activity and the flow of protons through the CF(0) complex.</text>
</comment>
<comment type="subunit">
    <text evidence="1">F-type ATPases have 2 components, CF(1) - the catalytic core - and CF(0) - the membrane proton channel. CF(1) has five subunits: alpha(3), beta(3), gamma(1), delta(1), epsilon(1). CF(0) has three main subunits: a, b and c.</text>
</comment>
<comment type="subcellular location">
    <subcellularLocation>
        <location evidence="1">Cell inner membrane</location>
        <topology evidence="1">Peripheral membrane protein</topology>
    </subcellularLocation>
</comment>
<comment type="similarity">
    <text evidence="1">Belongs to the ATPase gamma chain family.</text>
</comment>
<reference key="1">
    <citation type="journal article" date="2007" name="PLoS Genet.">
        <title>A tale of two oxidation states: bacterial colonization of arsenic-rich environments.</title>
        <authorList>
            <person name="Muller D."/>
            <person name="Medigue C."/>
            <person name="Koechler S."/>
            <person name="Barbe V."/>
            <person name="Barakat M."/>
            <person name="Talla E."/>
            <person name="Bonnefoy V."/>
            <person name="Krin E."/>
            <person name="Arsene-Ploetze F."/>
            <person name="Carapito C."/>
            <person name="Chandler M."/>
            <person name="Cournoyer B."/>
            <person name="Cruveiller S."/>
            <person name="Dossat C."/>
            <person name="Duval S."/>
            <person name="Heymann M."/>
            <person name="Leize E."/>
            <person name="Lieutaud A."/>
            <person name="Lievremont D."/>
            <person name="Makita Y."/>
            <person name="Mangenot S."/>
            <person name="Nitschke W."/>
            <person name="Ortet P."/>
            <person name="Perdrial N."/>
            <person name="Schoepp B."/>
            <person name="Siguier P."/>
            <person name="Simeonova D.D."/>
            <person name="Rouy Z."/>
            <person name="Segurens B."/>
            <person name="Turlin E."/>
            <person name="Vallenet D."/>
            <person name="van Dorsselaer A."/>
            <person name="Weiss S."/>
            <person name="Weissenbach J."/>
            <person name="Lett M.-C."/>
            <person name="Danchin A."/>
            <person name="Bertin P.N."/>
        </authorList>
    </citation>
    <scope>NUCLEOTIDE SEQUENCE [LARGE SCALE GENOMIC DNA]</scope>
    <source>
        <strain>ULPAs1</strain>
    </source>
</reference>
<sequence>MASGKEIRGKIKSVENTKKITKAMEMVAASKMRKAQERMHAARPYSDKIRNIAANLSQANPEYTHPFLVKSDVSKTVGFIIVTTDKGLCGGMNTNSLRIVTTKLRELEAQGKKVETVAIGNKGLGFLNRIGARVVSHAVQIGDTPHLDKLIGPVKVMLDAYQDGKLDAVYVVYTKFINTMKQEPMMEQLLPLAADALKADADSLAWDYIYEPDAQTVIDELLIRYVEALIFQSVAENLASEQSARMVAMKSASDNAGSVIGELKLVYNKTRQAAITKELSEIVAGAAAV</sequence>
<feature type="chain" id="PRO_1000053228" description="ATP synthase gamma chain">
    <location>
        <begin position="1"/>
        <end position="289"/>
    </location>
</feature>
<protein>
    <recommendedName>
        <fullName evidence="1">ATP synthase gamma chain</fullName>
    </recommendedName>
    <alternativeName>
        <fullName evidence="1">ATP synthase F1 sector gamma subunit</fullName>
    </alternativeName>
    <alternativeName>
        <fullName evidence="1">F-ATPase gamma subunit</fullName>
    </alternativeName>
</protein>
<evidence type="ECO:0000255" key="1">
    <source>
        <dbReference type="HAMAP-Rule" id="MF_00815"/>
    </source>
</evidence>
<name>ATPG_HERAR</name>
<accession>A4GAH0</accession>
<dbReference type="EMBL" id="CU207211">
    <property type="protein sequence ID" value="CAL63507.1"/>
    <property type="molecule type" value="Genomic_DNA"/>
</dbReference>
<dbReference type="SMR" id="A4GAH0"/>
<dbReference type="STRING" id="204773.HEAR3406"/>
<dbReference type="KEGG" id="har:HEAR3406"/>
<dbReference type="eggNOG" id="COG0224">
    <property type="taxonomic scope" value="Bacteria"/>
</dbReference>
<dbReference type="HOGENOM" id="CLU_050669_0_1_4"/>
<dbReference type="OrthoDB" id="9812769at2"/>
<dbReference type="Proteomes" id="UP000006697">
    <property type="component" value="Chromosome"/>
</dbReference>
<dbReference type="GO" id="GO:0005886">
    <property type="term" value="C:plasma membrane"/>
    <property type="evidence" value="ECO:0007669"/>
    <property type="project" value="UniProtKB-SubCell"/>
</dbReference>
<dbReference type="GO" id="GO:0045259">
    <property type="term" value="C:proton-transporting ATP synthase complex"/>
    <property type="evidence" value="ECO:0007669"/>
    <property type="project" value="UniProtKB-KW"/>
</dbReference>
<dbReference type="GO" id="GO:0005524">
    <property type="term" value="F:ATP binding"/>
    <property type="evidence" value="ECO:0007669"/>
    <property type="project" value="UniProtKB-UniRule"/>
</dbReference>
<dbReference type="GO" id="GO:0046933">
    <property type="term" value="F:proton-transporting ATP synthase activity, rotational mechanism"/>
    <property type="evidence" value="ECO:0007669"/>
    <property type="project" value="UniProtKB-UniRule"/>
</dbReference>
<dbReference type="GO" id="GO:0042777">
    <property type="term" value="P:proton motive force-driven plasma membrane ATP synthesis"/>
    <property type="evidence" value="ECO:0007669"/>
    <property type="project" value="UniProtKB-UniRule"/>
</dbReference>
<dbReference type="CDD" id="cd12151">
    <property type="entry name" value="F1-ATPase_gamma"/>
    <property type="match status" value="1"/>
</dbReference>
<dbReference type="FunFam" id="1.10.287.80:FF:000005">
    <property type="entry name" value="ATP synthase gamma chain"/>
    <property type="match status" value="1"/>
</dbReference>
<dbReference type="Gene3D" id="3.40.1380.10">
    <property type="match status" value="1"/>
</dbReference>
<dbReference type="Gene3D" id="1.10.287.80">
    <property type="entry name" value="ATP synthase, gamma subunit, helix hairpin domain"/>
    <property type="match status" value="1"/>
</dbReference>
<dbReference type="HAMAP" id="MF_00815">
    <property type="entry name" value="ATP_synth_gamma_bact"/>
    <property type="match status" value="1"/>
</dbReference>
<dbReference type="InterPro" id="IPR035968">
    <property type="entry name" value="ATP_synth_F1_ATPase_gsu"/>
</dbReference>
<dbReference type="InterPro" id="IPR000131">
    <property type="entry name" value="ATP_synth_F1_gsu"/>
</dbReference>
<dbReference type="InterPro" id="IPR023632">
    <property type="entry name" value="ATP_synth_F1_gsu_CS"/>
</dbReference>
<dbReference type="NCBIfam" id="TIGR01146">
    <property type="entry name" value="ATPsyn_F1gamma"/>
    <property type="match status" value="1"/>
</dbReference>
<dbReference type="NCBIfam" id="NF004144">
    <property type="entry name" value="PRK05621.1-1"/>
    <property type="match status" value="1"/>
</dbReference>
<dbReference type="PANTHER" id="PTHR11693">
    <property type="entry name" value="ATP SYNTHASE GAMMA CHAIN"/>
    <property type="match status" value="1"/>
</dbReference>
<dbReference type="PANTHER" id="PTHR11693:SF22">
    <property type="entry name" value="ATP SYNTHASE SUBUNIT GAMMA, MITOCHONDRIAL"/>
    <property type="match status" value="1"/>
</dbReference>
<dbReference type="Pfam" id="PF00231">
    <property type="entry name" value="ATP-synt"/>
    <property type="match status" value="1"/>
</dbReference>
<dbReference type="PRINTS" id="PR00126">
    <property type="entry name" value="ATPASEGAMMA"/>
</dbReference>
<dbReference type="SUPFAM" id="SSF52943">
    <property type="entry name" value="ATP synthase (F1-ATPase), gamma subunit"/>
    <property type="match status" value="1"/>
</dbReference>
<dbReference type="PROSITE" id="PS00153">
    <property type="entry name" value="ATPASE_GAMMA"/>
    <property type="match status" value="1"/>
</dbReference>
<organism>
    <name type="scientific">Herminiimonas arsenicoxydans</name>
    <dbReference type="NCBI Taxonomy" id="204773"/>
    <lineage>
        <taxon>Bacteria</taxon>
        <taxon>Pseudomonadati</taxon>
        <taxon>Pseudomonadota</taxon>
        <taxon>Betaproteobacteria</taxon>
        <taxon>Burkholderiales</taxon>
        <taxon>Oxalobacteraceae</taxon>
        <taxon>Herminiimonas</taxon>
    </lineage>
</organism>
<gene>
    <name evidence="1" type="primary">atpG</name>
    <name type="ordered locus">HEAR3406</name>
</gene>